<reference key="1">
    <citation type="journal article" date="1991" name="Agric. Biol. Chem.">
        <title>Cloning and characterization of the pectate lyase III gene of Erwinia carotovora Er.</title>
        <authorList>
            <person name="Yoshida A."/>
            <person name="Izuta M."/>
            <person name="Ito K."/>
            <person name="Kamio Y."/>
            <person name="Izaki K."/>
        </authorList>
    </citation>
    <scope>NUCLEOTIDE SEQUENCE [GENOMIC DNA]</scope>
    <scope>PARTIAL PROTEIN SEQUENCE</scope>
    <source>
        <strain>Er</strain>
    </source>
</reference>
<gene>
    <name type="primary">pel3</name>
    <name type="synonym">pelC</name>
    <name type="synonym">pelCI</name>
</gene>
<comment type="function">
    <text>Involved in maceration and soft-rotting of plant tissue.</text>
</comment>
<comment type="catalytic activity">
    <reaction>
        <text>Eliminative cleavage of (1-&gt;4)-alpha-D-galacturonan to give oligosaccharides with 4-deoxy-alpha-D-galact-4-enuronosyl groups at their non-reducing ends.</text>
        <dbReference type="EC" id="4.2.2.2"/>
    </reaction>
</comment>
<comment type="cofactor">
    <cofactor evidence="1">
        <name>Ca(2+)</name>
        <dbReference type="ChEBI" id="CHEBI:29108"/>
    </cofactor>
    <text evidence="1">Binds 1 Ca(2+) ion per subunit.</text>
</comment>
<comment type="pathway">
    <text>Glycan metabolism; pectin degradation; 2-dehydro-3-deoxy-D-gluconate from pectin: step 2/5.</text>
</comment>
<comment type="subcellular location">
    <subcellularLocation>
        <location>Secreted</location>
    </subcellularLocation>
</comment>
<comment type="similarity">
    <text evidence="3">Belongs to the polysaccharide lyase 1 family. PLADES subfamily.</text>
</comment>
<sequence>MKYLLPSAAAGLLLLAAQPTMAANTGGYATTDGGDVAGAVKKTARSMQDIIDIIEAAKLDSNGKKVKGGAYPLVITYNGNEDALIKAAEANICGQWSKDARGVEIKEFTKGITIIGTNGSSANFGIWLTKSSDIVIRNMRFGYMPGGAQDGDAIRIDNTPNVWIDHNEIFAKNFECAGTKDGDTTFESAIDIKKASTNVTISYNYIHGIKKVGLSGFSSSDTGRDLTYHHNIYDDVNARLPLQRGGQVHAYNNLYTGITSSGLNVRQKGIALIERNWFENAKNPVTSRYDGSNFGTWELRNNNVMSPADFAKYNITWDKDSKPYVNAEDWKSTGTFASVPYSYSPVSAQCVKDKLANYAGVNKNLAVLTAANCN</sequence>
<feature type="signal peptide">
    <location>
        <begin position="1"/>
        <end position="22"/>
    </location>
</feature>
<feature type="chain" id="PRO_0000024851" description="Pectate lyase 3">
    <location>
        <begin position="23"/>
        <end position="374"/>
    </location>
</feature>
<feature type="active site" evidence="2">
    <location>
        <position position="239"/>
    </location>
</feature>
<feature type="binding site" evidence="1">
    <location>
        <position position="150"/>
    </location>
    <ligand>
        <name>Ca(2+)</name>
        <dbReference type="ChEBI" id="CHEBI:29108"/>
    </ligand>
</feature>
<feature type="binding site" evidence="1">
    <location>
        <position position="152"/>
    </location>
    <ligand>
        <name>Ca(2+)</name>
        <dbReference type="ChEBI" id="CHEBI:29108"/>
    </ligand>
</feature>
<feature type="binding site" evidence="1">
    <location>
        <position position="187"/>
    </location>
    <ligand>
        <name>Ca(2+)</name>
        <dbReference type="ChEBI" id="CHEBI:29108"/>
    </ligand>
</feature>
<feature type="binding site" evidence="1">
    <location>
        <position position="191"/>
    </location>
    <ligand>
        <name>Ca(2+)</name>
        <dbReference type="ChEBI" id="CHEBI:29108"/>
    </ligand>
</feature>
<feature type="disulfide bond" evidence="1">
    <location>
        <begin position="93"/>
        <end position="176"/>
    </location>
</feature>
<feature type="disulfide bond" evidence="1">
    <location>
        <begin position="350"/>
        <end position="373"/>
    </location>
</feature>
<proteinExistence type="evidence at protein level"/>
<name>PLY3_PECCA</name>
<accession>P0C1C2</accession>
<accession>O31035</accession>
<accession>P14006</accession>
<accession>P29171</accession>
<accession>Q47470</accession>
<evidence type="ECO:0000250" key="1"/>
<evidence type="ECO:0000255" key="2"/>
<evidence type="ECO:0000305" key="3"/>
<keyword id="KW-0106">Calcium</keyword>
<keyword id="KW-0903">Direct protein sequencing</keyword>
<keyword id="KW-1015">Disulfide bond</keyword>
<keyword id="KW-0456">Lyase</keyword>
<keyword id="KW-0479">Metal-binding</keyword>
<keyword id="KW-0964">Secreted</keyword>
<keyword id="KW-0732">Signal</keyword>
<protein>
    <recommendedName>
        <fullName>Pectate lyase 3</fullName>
        <ecNumber>4.2.2.2</ecNumber>
    </recommendedName>
    <alternativeName>
        <fullName>Pectate lyase C</fullName>
        <shortName>PLC</shortName>
    </alternativeName>
    <alternativeName>
        <fullName>Pectate lyase III</fullName>
        <shortName>PEL III</shortName>
    </alternativeName>
</protein>
<dbReference type="EC" id="4.2.2.2"/>
<dbReference type="EMBL" id="D10064">
    <property type="protein sequence ID" value="BAA00953.1"/>
    <property type="molecule type" value="Genomic_DNA"/>
</dbReference>
<dbReference type="PIR" id="JU0462">
    <property type="entry name" value="WZWCP3"/>
</dbReference>
<dbReference type="SMR" id="P0C1C2"/>
<dbReference type="CAZy" id="PL1">
    <property type="family name" value="Polysaccharide Lyase Family 1"/>
</dbReference>
<dbReference type="UniPathway" id="UPA00545">
    <property type="reaction ID" value="UER00824"/>
</dbReference>
<dbReference type="GO" id="GO:0005576">
    <property type="term" value="C:extracellular region"/>
    <property type="evidence" value="ECO:0007669"/>
    <property type="project" value="UniProtKB-SubCell"/>
</dbReference>
<dbReference type="GO" id="GO:0046872">
    <property type="term" value="F:metal ion binding"/>
    <property type="evidence" value="ECO:0007669"/>
    <property type="project" value="UniProtKB-KW"/>
</dbReference>
<dbReference type="GO" id="GO:0030570">
    <property type="term" value="F:pectate lyase activity"/>
    <property type="evidence" value="ECO:0007669"/>
    <property type="project" value="UniProtKB-EC"/>
</dbReference>
<dbReference type="GO" id="GO:0045490">
    <property type="term" value="P:pectin catabolic process"/>
    <property type="evidence" value="ECO:0007669"/>
    <property type="project" value="UniProtKB-UniPathway"/>
</dbReference>
<dbReference type="Gene3D" id="2.160.20.10">
    <property type="entry name" value="Single-stranded right-handed beta-helix, Pectin lyase-like"/>
    <property type="match status" value="1"/>
</dbReference>
<dbReference type="InterPro" id="IPR002022">
    <property type="entry name" value="Pec_lyase"/>
</dbReference>
<dbReference type="InterPro" id="IPR012334">
    <property type="entry name" value="Pectin_lyas_fold"/>
</dbReference>
<dbReference type="InterPro" id="IPR011050">
    <property type="entry name" value="Pectin_lyase_fold/virulence"/>
</dbReference>
<dbReference type="InterPro" id="IPR045032">
    <property type="entry name" value="PEL"/>
</dbReference>
<dbReference type="PANTHER" id="PTHR31683">
    <property type="entry name" value="PECTATE LYASE 18-RELATED"/>
    <property type="match status" value="1"/>
</dbReference>
<dbReference type="PANTHER" id="PTHR31683:SF18">
    <property type="entry name" value="PECTATE LYASE 21-RELATED"/>
    <property type="match status" value="1"/>
</dbReference>
<dbReference type="Pfam" id="PF00544">
    <property type="entry name" value="Pectate_lyase_4"/>
    <property type="match status" value="1"/>
</dbReference>
<dbReference type="SMART" id="SM00656">
    <property type="entry name" value="Amb_all"/>
    <property type="match status" value="1"/>
</dbReference>
<dbReference type="SUPFAM" id="SSF51126">
    <property type="entry name" value="Pectin lyase-like"/>
    <property type="match status" value="1"/>
</dbReference>
<organism>
    <name type="scientific">Pectobacterium carotovorum</name>
    <name type="common">Erwinia carotovora</name>
    <dbReference type="NCBI Taxonomy" id="554"/>
    <lineage>
        <taxon>Bacteria</taxon>
        <taxon>Pseudomonadati</taxon>
        <taxon>Pseudomonadota</taxon>
        <taxon>Gammaproteobacteria</taxon>
        <taxon>Enterobacterales</taxon>
        <taxon>Pectobacteriaceae</taxon>
        <taxon>Pectobacterium</taxon>
    </lineage>
</organism>